<keyword id="KW-0143">Chaperone</keyword>
<keyword id="KW-0963">Cytoplasm</keyword>
<keyword id="KW-0342">GTP-binding</keyword>
<keyword id="KW-0996">Nickel insertion</keyword>
<keyword id="KW-0547">Nucleotide-binding</keyword>
<keyword id="KW-1185">Reference proteome</keyword>
<protein>
    <recommendedName>
        <fullName evidence="1">Urease accessory protein UreG</fullName>
    </recommendedName>
</protein>
<proteinExistence type="inferred from homology"/>
<gene>
    <name evidence="1" type="primary">ureG</name>
    <name type="ordered locus">SCO1232</name>
    <name type="ORF">2SCG1.07c</name>
</gene>
<reference key="1">
    <citation type="journal article" date="2002" name="Nature">
        <title>Complete genome sequence of the model actinomycete Streptomyces coelicolor A3(2).</title>
        <authorList>
            <person name="Bentley S.D."/>
            <person name="Chater K.F."/>
            <person name="Cerdeno-Tarraga A.-M."/>
            <person name="Challis G.L."/>
            <person name="Thomson N.R."/>
            <person name="James K.D."/>
            <person name="Harris D.E."/>
            <person name="Quail M.A."/>
            <person name="Kieser H."/>
            <person name="Harper D."/>
            <person name="Bateman A."/>
            <person name="Brown S."/>
            <person name="Chandra G."/>
            <person name="Chen C.W."/>
            <person name="Collins M."/>
            <person name="Cronin A."/>
            <person name="Fraser A."/>
            <person name="Goble A."/>
            <person name="Hidalgo J."/>
            <person name="Hornsby T."/>
            <person name="Howarth S."/>
            <person name="Huang C.-H."/>
            <person name="Kieser T."/>
            <person name="Larke L."/>
            <person name="Murphy L.D."/>
            <person name="Oliver K."/>
            <person name="O'Neil S."/>
            <person name="Rabbinowitsch E."/>
            <person name="Rajandream M.A."/>
            <person name="Rutherford K.M."/>
            <person name="Rutter S."/>
            <person name="Seeger K."/>
            <person name="Saunders D."/>
            <person name="Sharp S."/>
            <person name="Squares R."/>
            <person name="Squares S."/>
            <person name="Taylor K."/>
            <person name="Warren T."/>
            <person name="Wietzorrek A."/>
            <person name="Woodward J.R."/>
            <person name="Barrell B.G."/>
            <person name="Parkhill J."/>
            <person name="Hopwood D.A."/>
        </authorList>
    </citation>
    <scope>NUCLEOTIDE SEQUENCE [LARGE SCALE GENOMIC DNA]</scope>
    <source>
        <strain>ATCC BAA-471 / A3(2) / M145</strain>
    </source>
</reference>
<sequence>MHLDHHHESAAAVSADARRPDGSRRALRIGLGGPVGSGKTATVAALCRALRAELSLAVVTNDIYTREDAEFLLREAVLPPERITAVETGACPHTAIRDDISANLEAVEDLEDEVGPLDLVLVESGGDNLTATFSRGLVDAQVFVIDVAGGDDIPRKGGPGVATADLLIVNKTDLAPYVGSDLARMAADAKAARGELPVVLQSLRGEDGVREVADWVRERIAAWTA</sequence>
<comment type="function">
    <text evidence="1">Facilitates the functional incorporation of the urease nickel metallocenter. This process requires GTP hydrolysis, probably effectuated by UreG.</text>
</comment>
<comment type="subunit">
    <text evidence="1">Homodimer. UreD, UreF and UreG form a complex that acts as a GTP-hydrolysis-dependent molecular chaperone, activating the urease apoprotein by helping to assemble the nickel containing metallocenter of UreC. The UreE protein probably delivers the nickel.</text>
</comment>
<comment type="subcellular location">
    <subcellularLocation>
        <location evidence="1">Cytoplasm</location>
    </subcellularLocation>
</comment>
<comment type="similarity">
    <text evidence="1">Belongs to the SIMIBI class G3E GTPase family. UreG subfamily.</text>
</comment>
<evidence type="ECO:0000255" key="1">
    <source>
        <dbReference type="HAMAP-Rule" id="MF_01389"/>
    </source>
</evidence>
<evidence type="ECO:0000256" key="2">
    <source>
        <dbReference type="SAM" id="MobiDB-lite"/>
    </source>
</evidence>
<dbReference type="EMBL" id="AL939108">
    <property type="protein sequence ID" value="CAC01456.1"/>
    <property type="molecule type" value="Genomic_DNA"/>
</dbReference>
<dbReference type="RefSeq" id="NP_625520.1">
    <property type="nucleotide sequence ID" value="NC_003888.3"/>
</dbReference>
<dbReference type="RefSeq" id="WP_003977599.1">
    <property type="nucleotide sequence ID" value="NZ_VNID01000006.1"/>
</dbReference>
<dbReference type="SMR" id="Q9FCD5"/>
<dbReference type="FunCoup" id="Q9FCD5">
    <property type="interactions" value="149"/>
</dbReference>
<dbReference type="STRING" id="100226.gene:17758815"/>
<dbReference type="PaxDb" id="100226-SCO1232"/>
<dbReference type="GeneID" id="91387804"/>
<dbReference type="KEGG" id="sco:SCO1232"/>
<dbReference type="PATRIC" id="fig|100226.15.peg.1231"/>
<dbReference type="eggNOG" id="COG0378">
    <property type="taxonomic scope" value="Bacteria"/>
</dbReference>
<dbReference type="HOGENOM" id="CLU_072144_1_0_11"/>
<dbReference type="InParanoid" id="Q9FCD5"/>
<dbReference type="OrthoDB" id="9802035at2"/>
<dbReference type="PhylomeDB" id="Q9FCD5"/>
<dbReference type="Proteomes" id="UP000001973">
    <property type="component" value="Chromosome"/>
</dbReference>
<dbReference type="GO" id="GO:0005737">
    <property type="term" value="C:cytoplasm"/>
    <property type="evidence" value="ECO:0007669"/>
    <property type="project" value="UniProtKB-SubCell"/>
</dbReference>
<dbReference type="GO" id="GO:0005525">
    <property type="term" value="F:GTP binding"/>
    <property type="evidence" value="ECO:0007669"/>
    <property type="project" value="UniProtKB-KW"/>
</dbReference>
<dbReference type="GO" id="GO:0003924">
    <property type="term" value="F:GTPase activity"/>
    <property type="evidence" value="ECO:0007669"/>
    <property type="project" value="InterPro"/>
</dbReference>
<dbReference type="GO" id="GO:0016151">
    <property type="term" value="F:nickel cation binding"/>
    <property type="evidence" value="ECO:0007669"/>
    <property type="project" value="UniProtKB-UniRule"/>
</dbReference>
<dbReference type="GO" id="GO:0043419">
    <property type="term" value="P:urea catabolic process"/>
    <property type="evidence" value="ECO:0007669"/>
    <property type="project" value="InterPro"/>
</dbReference>
<dbReference type="Gene3D" id="3.40.50.300">
    <property type="entry name" value="P-loop containing nucleotide triphosphate hydrolases"/>
    <property type="match status" value="1"/>
</dbReference>
<dbReference type="HAMAP" id="MF_01389">
    <property type="entry name" value="UreG"/>
    <property type="match status" value="1"/>
</dbReference>
<dbReference type="InterPro" id="IPR003495">
    <property type="entry name" value="CobW/HypB/UreG_nucleotide-bd"/>
</dbReference>
<dbReference type="InterPro" id="IPR027417">
    <property type="entry name" value="P-loop_NTPase"/>
</dbReference>
<dbReference type="InterPro" id="IPR004400">
    <property type="entry name" value="UreG"/>
</dbReference>
<dbReference type="NCBIfam" id="TIGR00101">
    <property type="entry name" value="ureG"/>
    <property type="match status" value="1"/>
</dbReference>
<dbReference type="PANTHER" id="PTHR31715">
    <property type="entry name" value="UREASE ACCESSORY PROTEIN G"/>
    <property type="match status" value="1"/>
</dbReference>
<dbReference type="PANTHER" id="PTHR31715:SF0">
    <property type="entry name" value="UREASE ACCESSORY PROTEIN G"/>
    <property type="match status" value="1"/>
</dbReference>
<dbReference type="Pfam" id="PF02492">
    <property type="entry name" value="cobW"/>
    <property type="match status" value="1"/>
</dbReference>
<dbReference type="PIRSF" id="PIRSF005624">
    <property type="entry name" value="Ni-bind_GTPase"/>
    <property type="match status" value="1"/>
</dbReference>
<dbReference type="SUPFAM" id="SSF52540">
    <property type="entry name" value="P-loop containing nucleoside triphosphate hydrolases"/>
    <property type="match status" value="1"/>
</dbReference>
<accession>Q9FCD5</accession>
<feature type="chain" id="PRO_0000347449" description="Urease accessory protein UreG">
    <location>
        <begin position="1"/>
        <end position="225"/>
    </location>
</feature>
<feature type="region of interest" description="Disordered" evidence="2">
    <location>
        <begin position="1"/>
        <end position="21"/>
    </location>
</feature>
<feature type="binding site" evidence="1">
    <location>
        <begin position="33"/>
        <end position="40"/>
    </location>
    <ligand>
        <name>GTP</name>
        <dbReference type="ChEBI" id="CHEBI:37565"/>
    </ligand>
</feature>
<organism>
    <name type="scientific">Streptomyces coelicolor (strain ATCC BAA-471 / A3(2) / M145)</name>
    <dbReference type="NCBI Taxonomy" id="100226"/>
    <lineage>
        <taxon>Bacteria</taxon>
        <taxon>Bacillati</taxon>
        <taxon>Actinomycetota</taxon>
        <taxon>Actinomycetes</taxon>
        <taxon>Kitasatosporales</taxon>
        <taxon>Streptomycetaceae</taxon>
        <taxon>Streptomyces</taxon>
        <taxon>Streptomyces albidoflavus group</taxon>
    </lineage>
</organism>
<name>UREG_STRCO</name>